<comment type="function">
    <text evidence="1">Single strand-specific metallo-endoribonuclease involved in late-stage 70S ribosome quality control and in maturation of the 3' terminus of the 16S rRNA.</text>
</comment>
<comment type="cofactor">
    <cofactor evidence="1">
        <name>Zn(2+)</name>
        <dbReference type="ChEBI" id="CHEBI:29105"/>
    </cofactor>
    <text evidence="1">Binds 1 zinc ion.</text>
</comment>
<comment type="subcellular location">
    <subcellularLocation>
        <location evidence="1">Cytoplasm</location>
    </subcellularLocation>
</comment>
<comment type="similarity">
    <text evidence="1">Belongs to the endoribonuclease YbeY family.</text>
</comment>
<comment type="sequence caution" evidence="2">
    <conflict type="erroneous initiation">
        <sequence resource="EMBL-CDS" id="ABK09445"/>
    </conflict>
</comment>
<reference key="1">
    <citation type="submission" date="2006-08" db="EMBL/GenBank/DDBJ databases">
        <title>Complete sequence of chromosome 1 of Burkholderia cenocepacia HI2424.</title>
        <authorList>
            <person name="Copeland A."/>
            <person name="Lucas S."/>
            <person name="Lapidus A."/>
            <person name="Barry K."/>
            <person name="Detter J.C."/>
            <person name="Glavina del Rio T."/>
            <person name="Hammon N."/>
            <person name="Israni S."/>
            <person name="Pitluck S."/>
            <person name="Chain P."/>
            <person name="Malfatti S."/>
            <person name="Shin M."/>
            <person name="Vergez L."/>
            <person name="Schmutz J."/>
            <person name="Larimer F."/>
            <person name="Land M."/>
            <person name="Hauser L."/>
            <person name="Kyrpides N."/>
            <person name="Kim E."/>
            <person name="LiPuma J.J."/>
            <person name="Gonzalez C.F."/>
            <person name="Konstantinidis K."/>
            <person name="Tiedje J.M."/>
            <person name="Richardson P."/>
        </authorList>
    </citation>
    <scope>NUCLEOTIDE SEQUENCE [LARGE SCALE GENOMIC DNA]</scope>
    <source>
        <strain>HI2424</strain>
    </source>
</reference>
<evidence type="ECO:0000255" key="1">
    <source>
        <dbReference type="HAMAP-Rule" id="MF_00009"/>
    </source>
</evidence>
<evidence type="ECO:0000305" key="2"/>
<organism>
    <name type="scientific">Burkholderia cenocepacia (strain HI2424)</name>
    <dbReference type="NCBI Taxonomy" id="331272"/>
    <lineage>
        <taxon>Bacteria</taxon>
        <taxon>Pseudomonadati</taxon>
        <taxon>Pseudomonadota</taxon>
        <taxon>Betaproteobacteria</taxon>
        <taxon>Burkholderiales</taxon>
        <taxon>Burkholderiaceae</taxon>
        <taxon>Burkholderia</taxon>
        <taxon>Burkholderia cepacia complex</taxon>
    </lineage>
</organism>
<keyword id="KW-0963">Cytoplasm</keyword>
<keyword id="KW-0255">Endonuclease</keyword>
<keyword id="KW-0378">Hydrolase</keyword>
<keyword id="KW-0479">Metal-binding</keyword>
<keyword id="KW-0540">Nuclease</keyword>
<keyword id="KW-0690">Ribosome biogenesis</keyword>
<keyword id="KW-0698">rRNA processing</keyword>
<keyword id="KW-0862">Zinc</keyword>
<proteinExistence type="inferred from homology"/>
<accession>A0KAB8</accession>
<sequence length="172" mass="19009">MTLHVGAEFAPREDDPEDEPRALELDLSVQYGDEITSDVRKTLPKRKLIAEWIEPALFASAQLTVRFVGENEGRTLNAGYRHKDYPTNVLTFAYDAAPDGTVIGDLVLCCPVVEKEAHDQGKPLAAHYAHLLVHGALHAQGYDHETSDEDAAEMEALEVDILAKLGFPNPYQ</sequence>
<gene>
    <name evidence="1" type="primary">ybeY</name>
    <name type="ordered locus">Bcen2424_2695</name>
</gene>
<feature type="chain" id="PRO_0000284173" description="Endoribonuclease YbeY">
    <location>
        <begin position="1"/>
        <end position="172"/>
    </location>
</feature>
<feature type="binding site" evidence="1">
    <location>
        <position position="134"/>
    </location>
    <ligand>
        <name>Zn(2+)</name>
        <dbReference type="ChEBI" id="CHEBI:29105"/>
        <note>catalytic</note>
    </ligand>
</feature>
<feature type="binding site" evidence="1">
    <location>
        <position position="138"/>
    </location>
    <ligand>
        <name>Zn(2+)</name>
        <dbReference type="ChEBI" id="CHEBI:29105"/>
        <note>catalytic</note>
    </ligand>
</feature>
<feature type="binding site" evidence="1">
    <location>
        <position position="144"/>
    </location>
    <ligand>
        <name>Zn(2+)</name>
        <dbReference type="ChEBI" id="CHEBI:29105"/>
        <note>catalytic</note>
    </ligand>
</feature>
<dbReference type="EC" id="3.1.-.-" evidence="1"/>
<dbReference type="EMBL" id="CP000458">
    <property type="protein sequence ID" value="ABK09445.1"/>
    <property type="status" value="ALT_INIT"/>
    <property type="molecule type" value="Genomic_DNA"/>
</dbReference>
<dbReference type="SMR" id="A0KAB8"/>
<dbReference type="KEGG" id="bch:Bcen2424_2695"/>
<dbReference type="HOGENOM" id="CLU_1118710_0_0_4"/>
<dbReference type="GO" id="GO:0005737">
    <property type="term" value="C:cytoplasm"/>
    <property type="evidence" value="ECO:0007669"/>
    <property type="project" value="UniProtKB-SubCell"/>
</dbReference>
<dbReference type="GO" id="GO:0004222">
    <property type="term" value="F:metalloendopeptidase activity"/>
    <property type="evidence" value="ECO:0007669"/>
    <property type="project" value="InterPro"/>
</dbReference>
<dbReference type="GO" id="GO:0004521">
    <property type="term" value="F:RNA endonuclease activity"/>
    <property type="evidence" value="ECO:0007669"/>
    <property type="project" value="UniProtKB-UniRule"/>
</dbReference>
<dbReference type="GO" id="GO:0008270">
    <property type="term" value="F:zinc ion binding"/>
    <property type="evidence" value="ECO:0007669"/>
    <property type="project" value="UniProtKB-UniRule"/>
</dbReference>
<dbReference type="GO" id="GO:0006364">
    <property type="term" value="P:rRNA processing"/>
    <property type="evidence" value="ECO:0007669"/>
    <property type="project" value="UniProtKB-UniRule"/>
</dbReference>
<dbReference type="Gene3D" id="3.40.390.30">
    <property type="entry name" value="Metalloproteases ('zincins'), catalytic domain"/>
    <property type="match status" value="1"/>
</dbReference>
<dbReference type="HAMAP" id="MF_00009">
    <property type="entry name" value="Endoribonucl_YbeY"/>
    <property type="match status" value="1"/>
</dbReference>
<dbReference type="InterPro" id="IPR023091">
    <property type="entry name" value="MetalPrtase_cat_dom_sf_prd"/>
</dbReference>
<dbReference type="InterPro" id="IPR002036">
    <property type="entry name" value="YbeY"/>
</dbReference>
<dbReference type="InterPro" id="IPR020549">
    <property type="entry name" value="YbeY_CS"/>
</dbReference>
<dbReference type="NCBIfam" id="NF010570">
    <property type="entry name" value="PRK13963.1"/>
    <property type="match status" value="1"/>
</dbReference>
<dbReference type="NCBIfam" id="TIGR00043">
    <property type="entry name" value="rRNA maturation RNase YbeY"/>
    <property type="match status" value="1"/>
</dbReference>
<dbReference type="PANTHER" id="PTHR46986">
    <property type="entry name" value="ENDORIBONUCLEASE YBEY, CHLOROPLASTIC"/>
    <property type="match status" value="1"/>
</dbReference>
<dbReference type="PANTHER" id="PTHR46986:SF1">
    <property type="entry name" value="ENDORIBONUCLEASE YBEY, CHLOROPLASTIC"/>
    <property type="match status" value="1"/>
</dbReference>
<dbReference type="Pfam" id="PF02130">
    <property type="entry name" value="YbeY"/>
    <property type="match status" value="1"/>
</dbReference>
<dbReference type="SUPFAM" id="SSF55486">
    <property type="entry name" value="Metalloproteases ('zincins'), catalytic domain"/>
    <property type="match status" value="1"/>
</dbReference>
<dbReference type="PROSITE" id="PS01306">
    <property type="entry name" value="UPF0054"/>
    <property type="match status" value="1"/>
</dbReference>
<protein>
    <recommendedName>
        <fullName evidence="1">Endoribonuclease YbeY</fullName>
        <ecNumber evidence="1">3.1.-.-</ecNumber>
    </recommendedName>
</protein>
<name>YBEY_BURCH</name>